<evidence type="ECO:0000255" key="1">
    <source>
        <dbReference type="HAMAP-Rule" id="MF_01554"/>
    </source>
</evidence>
<sequence>MKERKFFGTDGIRGKVGSGQMTPELALKLGWAAGRVLSRSGTKKVIIGKDTRISGYMFESALEAGLSAAGLNVMLMGPMPTPAVAYLTRTFRAEAGVVISASHNPYYDNGIKFFSTDGSKLDDNLELEIEAELEKPLVCVESHLLGKVSRIEDARGRYIEYCKGNFPAEHTLTGLKIVVDCAHGATYHIAPAVFRELGAEVIAIGDKPNGMNINDKVGATSMGKICETVIAESADLGIALDGDGDRIMMVNSKGEVIDGDQILYILACDAKSRGVLRGGVVGTLMSNLGLDLALQALDIPFARSKVGDRYVMELLKELDWRIGGENSGHILNLDHGTTGDGIVAGILVLAAMRRQNATLEELTSAMEMLPQVLVNVRFEGEHDPLKSDKVKAAQAQVESELGVRGRVLLRKSGTEPLIRVMVEGDDHSAVLAHANLIADAVKSAS</sequence>
<keyword id="KW-0413">Isomerase</keyword>
<keyword id="KW-0460">Magnesium</keyword>
<keyword id="KW-0479">Metal-binding</keyword>
<keyword id="KW-0597">Phosphoprotein</keyword>
<keyword id="KW-1185">Reference proteome</keyword>
<accession>A3D7L1</accession>
<reference key="1">
    <citation type="submission" date="2007-02" db="EMBL/GenBank/DDBJ databases">
        <title>Complete sequence of chromosome of Shewanella baltica OS155.</title>
        <authorList>
            <consortium name="US DOE Joint Genome Institute"/>
            <person name="Copeland A."/>
            <person name="Lucas S."/>
            <person name="Lapidus A."/>
            <person name="Barry K."/>
            <person name="Detter J.C."/>
            <person name="Glavina del Rio T."/>
            <person name="Hammon N."/>
            <person name="Israni S."/>
            <person name="Dalin E."/>
            <person name="Tice H."/>
            <person name="Pitluck S."/>
            <person name="Sims D.R."/>
            <person name="Brettin T."/>
            <person name="Bruce D."/>
            <person name="Han C."/>
            <person name="Tapia R."/>
            <person name="Brainard J."/>
            <person name="Schmutz J."/>
            <person name="Larimer F."/>
            <person name="Land M."/>
            <person name="Hauser L."/>
            <person name="Kyrpides N."/>
            <person name="Mikhailova N."/>
            <person name="Brettar I."/>
            <person name="Klappenbach J."/>
            <person name="Konstantinidis K."/>
            <person name="Rodrigues J."/>
            <person name="Tiedje J."/>
            <person name="Richardson P."/>
        </authorList>
    </citation>
    <scope>NUCLEOTIDE SEQUENCE [LARGE SCALE GENOMIC DNA]</scope>
    <source>
        <strain>OS155 / ATCC BAA-1091</strain>
    </source>
</reference>
<dbReference type="EC" id="5.4.2.10" evidence="1"/>
<dbReference type="EMBL" id="CP000563">
    <property type="protein sequence ID" value="ABN62724.1"/>
    <property type="molecule type" value="Genomic_DNA"/>
</dbReference>
<dbReference type="RefSeq" id="WP_011847518.1">
    <property type="nucleotide sequence ID" value="NC_009052.1"/>
</dbReference>
<dbReference type="SMR" id="A3D7L1"/>
<dbReference type="STRING" id="325240.Sbal_3244"/>
<dbReference type="GeneID" id="11773464"/>
<dbReference type="KEGG" id="sbl:Sbal_3244"/>
<dbReference type="HOGENOM" id="CLU_016950_7_0_6"/>
<dbReference type="OrthoDB" id="9803322at2"/>
<dbReference type="Proteomes" id="UP000001557">
    <property type="component" value="Chromosome"/>
</dbReference>
<dbReference type="GO" id="GO:0005829">
    <property type="term" value="C:cytosol"/>
    <property type="evidence" value="ECO:0007669"/>
    <property type="project" value="TreeGrafter"/>
</dbReference>
<dbReference type="GO" id="GO:0000287">
    <property type="term" value="F:magnesium ion binding"/>
    <property type="evidence" value="ECO:0007669"/>
    <property type="project" value="UniProtKB-UniRule"/>
</dbReference>
<dbReference type="GO" id="GO:0008966">
    <property type="term" value="F:phosphoglucosamine mutase activity"/>
    <property type="evidence" value="ECO:0007669"/>
    <property type="project" value="UniProtKB-UniRule"/>
</dbReference>
<dbReference type="GO" id="GO:0004615">
    <property type="term" value="F:phosphomannomutase activity"/>
    <property type="evidence" value="ECO:0007669"/>
    <property type="project" value="TreeGrafter"/>
</dbReference>
<dbReference type="GO" id="GO:0005975">
    <property type="term" value="P:carbohydrate metabolic process"/>
    <property type="evidence" value="ECO:0007669"/>
    <property type="project" value="InterPro"/>
</dbReference>
<dbReference type="GO" id="GO:0009252">
    <property type="term" value="P:peptidoglycan biosynthetic process"/>
    <property type="evidence" value="ECO:0007669"/>
    <property type="project" value="TreeGrafter"/>
</dbReference>
<dbReference type="GO" id="GO:0006048">
    <property type="term" value="P:UDP-N-acetylglucosamine biosynthetic process"/>
    <property type="evidence" value="ECO:0007669"/>
    <property type="project" value="TreeGrafter"/>
</dbReference>
<dbReference type="CDD" id="cd05802">
    <property type="entry name" value="GlmM"/>
    <property type="match status" value="1"/>
</dbReference>
<dbReference type="FunFam" id="3.30.310.50:FF:000001">
    <property type="entry name" value="Phosphoglucosamine mutase"/>
    <property type="match status" value="1"/>
</dbReference>
<dbReference type="FunFam" id="3.40.120.10:FF:000001">
    <property type="entry name" value="Phosphoglucosamine mutase"/>
    <property type="match status" value="1"/>
</dbReference>
<dbReference type="FunFam" id="3.40.120.10:FF:000003">
    <property type="entry name" value="Phosphoglucosamine mutase"/>
    <property type="match status" value="1"/>
</dbReference>
<dbReference type="Gene3D" id="3.40.120.10">
    <property type="entry name" value="Alpha-D-Glucose-1,6-Bisphosphate, subunit A, domain 3"/>
    <property type="match status" value="3"/>
</dbReference>
<dbReference type="Gene3D" id="3.30.310.50">
    <property type="entry name" value="Alpha-D-phosphohexomutase, C-terminal domain"/>
    <property type="match status" value="1"/>
</dbReference>
<dbReference type="HAMAP" id="MF_01554_B">
    <property type="entry name" value="GlmM_B"/>
    <property type="match status" value="1"/>
</dbReference>
<dbReference type="InterPro" id="IPR005844">
    <property type="entry name" value="A-D-PHexomutase_a/b/a-I"/>
</dbReference>
<dbReference type="InterPro" id="IPR016055">
    <property type="entry name" value="A-D-PHexomutase_a/b/a-I/II/III"/>
</dbReference>
<dbReference type="InterPro" id="IPR005845">
    <property type="entry name" value="A-D-PHexomutase_a/b/a-II"/>
</dbReference>
<dbReference type="InterPro" id="IPR005846">
    <property type="entry name" value="A-D-PHexomutase_a/b/a-III"/>
</dbReference>
<dbReference type="InterPro" id="IPR005843">
    <property type="entry name" value="A-D-PHexomutase_C"/>
</dbReference>
<dbReference type="InterPro" id="IPR036900">
    <property type="entry name" value="A-D-PHexomutase_C_sf"/>
</dbReference>
<dbReference type="InterPro" id="IPR016066">
    <property type="entry name" value="A-D-PHexomutase_CS"/>
</dbReference>
<dbReference type="InterPro" id="IPR005841">
    <property type="entry name" value="Alpha-D-phosphohexomutase_SF"/>
</dbReference>
<dbReference type="InterPro" id="IPR006352">
    <property type="entry name" value="GlmM_bact"/>
</dbReference>
<dbReference type="InterPro" id="IPR050060">
    <property type="entry name" value="Phosphoglucosamine_mutase"/>
</dbReference>
<dbReference type="NCBIfam" id="TIGR01455">
    <property type="entry name" value="glmM"/>
    <property type="match status" value="1"/>
</dbReference>
<dbReference type="NCBIfam" id="NF008139">
    <property type="entry name" value="PRK10887.1"/>
    <property type="match status" value="1"/>
</dbReference>
<dbReference type="PANTHER" id="PTHR42946:SF1">
    <property type="entry name" value="PHOSPHOGLUCOMUTASE (ALPHA-D-GLUCOSE-1,6-BISPHOSPHATE-DEPENDENT)"/>
    <property type="match status" value="1"/>
</dbReference>
<dbReference type="PANTHER" id="PTHR42946">
    <property type="entry name" value="PHOSPHOHEXOSE MUTASE"/>
    <property type="match status" value="1"/>
</dbReference>
<dbReference type="Pfam" id="PF02878">
    <property type="entry name" value="PGM_PMM_I"/>
    <property type="match status" value="1"/>
</dbReference>
<dbReference type="Pfam" id="PF02879">
    <property type="entry name" value="PGM_PMM_II"/>
    <property type="match status" value="1"/>
</dbReference>
<dbReference type="Pfam" id="PF02880">
    <property type="entry name" value="PGM_PMM_III"/>
    <property type="match status" value="1"/>
</dbReference>
<dbReference type="Pfam" id="PF00408">
    <property type="entry name" value="PGM_PMM_IV"/>
    <property type="match status" value="1"/>
</dbReference>
<dbReference type="PRINTS" id="PR00509">
    <property type="entry name" value="PGMPMM"/>
</dbReference>
<dbReference type="SUPFAM" id="SSF55957">
    <property type="entry name" value="Phosphoglucomutase, C-terminal domain"/>
    <property type="match status" value="1"/>
</dbReference>
<dbReference type="SUPFAM" id="SSF53738">
    <property type="entry name" value="Phosphoglucomutase, first 3 domains"/>
    <property type="match status" value="3"/>
</dbReference>
<dbReference type="PROSITE" id="PS00710">
    <property type="entry name" value="PGM_PMM"/>
    <property type="match status" value="1"/>
</dbReference>
<proteinExistence type="inferred from homology"/>
<gene>
    <name evidence="1" type="primary">glmM</name>
    <name type="ordered locus">Sbal_3244</name>
</gene>
<name>GLMM_SHEB5</name>
<feature type="chain" id="PRO_1000068915" description="Phosphoglucosamine mutase">
    <location>
        <begin position="1"/>
        <end position="445"/>
    </location>
</feature>
<feature type="active site" description="Phosphoserine intermediate" evidence="1">
    <location>
        <position position="102"/>
    </location>
</feature>
<feature type="binding site" description="via phosphate group" evidence="1">
    <location>
        <position position="102"/>
    </location>
    <ligand>
        <name>Mg(2+)</name>
        <dbReference type="ChEBI" id="CHEBI:18420"/>
    </ligand>
</feature>
<feature type="binding site" evidence="1">
    <location>
        <position position="241"/>
    </location>
    <ligand>
        <name>Mg(2+)</name>
        <dbReference type="ChEBI" id="CHEBI:18420"/>
    </ligand>
</feature>
<feature type="binding site" evidence="1">
    <location>
        <position position="243"/>
    </location>
    <ligand>
        <name>Mg(2+)</name>
        <dbReference type="ChEBI" id="CHEBI:18420"/>
    </ligand>
</feature>
<feature type="binding site" evidence="1">
    <location>
        <position position="245"/>
    </location>
    <ligand>
        <name>Mg(2+)</name>
        <dbReference type="ChEBI" id="CHEBI:18420"/>
    </ligand>
</feature>
<feature type="modified residue" description="Phosphoserine" evidence="1">
    <location>
        <position position="102"/>
    </location>
</feature>
<organism>
    <name type="scientific">Shewanella baltica (strain OS155 / ATCC BAA-1091)</name>
    <dbReference type="NCBI Taxonomy" id="325240"/>
    <lineage>
        <taxon>Bacteria</taxon>
        <taxon>Pseudomonadati</taxon>
        <taxon>Pseudomonadota</taxon>
        <taxon>Gammaproteobacteria</taxon>
        <taxon>Alteromonadales</taxon>
        <taxon>Shewanellaceae</taxon>
        <taxon>Shewanella</taxon>
    </lineage>
</organism>
<protein>
    <recommendedName>
        <fullName evidence="1">Phosphoglucosamine mutase</fullName>
        <ecNumber evidence="1">5.4.2.10</ecNumber>
    </recommendedName>
</protein>
<comment type="function">
    <text evidence="1">Catalyzes the conversion of glucosamine-6-phosphate to glucosamine-1-phosphate.</text>
</comment>
<comment type="catalytic activity">
    <reaction evidence="1">
        <text>alpha-D-glucosamine 1-phosphate = D-glucosamine 6-phosphate</text>
        <dbReference type="Rhea" id="RHEA:23424"/>
        <dbReference type="ChEBI" id="CHEBI:58516"/>
        <dbReference type="ChEBI" id="CHEBI:58725"/>
        <dbReference type="EC" id="5.4.2.10"/>
    </reaction>
</comment>
<comment type="cofactor">
    <cofactor evidence="1">
        <name>Mg(2+)</name>
        <dbReference type="ChEBI" id="CHEBI:18420"/>
    </cofactor>
    <text evidence="1">Binds 1 Mg(2+) ion per subunit.</text>
</comment>
<comment type="PTM">
    <text evidence="1">Activated by phosphorylation.</text>
</comment>
<comment type="similarity">
    <text evidence="1">Belongs to the phosphohexose mutase family.</text>
</comment>